<accession>B7NF64</accession>
<keyword id="KW-0119">Carbohydrate metabolism</keyword>
<keyword id="KW-0963">Cytoplasm</keyword>
<keyword id="KW-0413">Isomerase</keyword>
<feature type="chain" id="PRO_1000187147" description="D-ribose pyranase">
    <location>
        <begin position="1"/>
        <end position="139"/>
    </location>
</feature>
<feature type="active site" description="Proton donor" evidence="1">
    <location>
        <position position="20"/>
    </location>
</feature>
<feature type="binding site" evidence="1">
    <location>
        <position position="28"/>
    </location>
    <ligand>
        <name>substrate</name>
    </ligand>
</feature>
<feature type="binding site" evidence="1">
    <location>
        <position position="106"/>
    </location>
    <ligand>
        <name>substrate</name>
    </ligand>
</feature>
<feature type="binding site" evidence="1">
    <location>
        <begin position="128"/>
        <end position="130"/>
    </location>
    <ligand>
        <name>substrate</name>
    </ligand>
</feature>
<gene>
    <name evidence="1" type="primary">rbsD</name>
    <name type="ordered locus">ECUMN_4278</name>
</gene>
<sequence>MKKGTVLNSDISSVISRLGHTDTLVVCDAGLPIPKSTTRIDMALTQGVPSFMQVLGVVTNEMQVEAAIIAEEIKQHNPQLHETLLTHLEQLQKHQGNTIEIRYTTHEQFKQQTAESQAVIRSGECSPYANIILCAGVTF</sequence>
<dbReference type="EC" id="5.4.99.62" evidence="1"/>
<dbReference type="EMBL" id="CU928163">
    <property type="protein sequence ID" value="CAR15418.1"/>
    <property type="molecule type" value="Genomic_DNA"/>
</dbReference>
<dbReference type="RefSeq" id="WP_000715936.1">
    <property type="nucleotide sequence ID" value="NC_011751.1"/>
</dbReference>
<dbReference type="RefSeq" id="YP_002414913.1">
    <property type="nucleotide sequence ID" value="NC_011751.1"/>
</dbReference>
<dbReference type="SMR" id="B7NF64"/>
<dbReference type="STRING" id="585056.ECUMN_4278"/>
<dbReference type="GeneID" id="93778201"/>
<dbReference type="KEGG" id="eum:ECUMN_4278"/>
<dbReference type="PATRIC" id="fig|585056.7.peg.4450"/>
<dbReference type="HOGENOM" id="CLU_135498_0_0_6"/>
<dbReference type="UniPathway" id="UPA00916">
    <property type="reaction ID" value="UER00888"/>
</dbReference>
<dbReference type="Proteomes" id="UP000007097">
    <property type="component" value="Chromosome"/>
</dbReference>
<dbReference type="GO" id="GO:0005829">
    <property type="term" value="C:cytosol"/>
    <property type="evidence" value="ECO:0007669"/>
    <property type="project" value="TreeGrafter"/>
</dbReference>
<dbReference type="GO" id="GO:0062193">
    <property type="term" value="F:D-ribose pyranase activity"/>
    <property type="evidence" value="ECO:0007669"/>
    <property type="project" value="UniProtKB-EC"/>
</dbReference>
<dbReference type="GO" id="GO:0016872">
    <property type="term" value="F:intramolecular lyase activity"/>
    <property type="evidence" value="ECO:0007669"/>
    <property type="project" value="UniProtKB-UniRule"/>
</dbReference>
<dbReference type="GO" id="GO:0048029">
    <property type="term" value="F:monosaccharide binding"/>
    <property type="evidence" value="ECO:0007669"/>
    <property type="project" value="InterPro"/>
</dbReference>
<dbReference type="GO" id="GO:0019303">
    <property type="term" value="P:D-ribose catabolic process"/>
    <property type="evidence" value="ECO:0007669"/>
    <property type="project" value="UniProtKB-UniRule"/>
</dbReference>
<dbReference type="FunFam" id="3.40.1650.10:FF:000002">
    <property type="entry name" value="D-ribose pyranase"/>
    <property type="match status" value="1"/>
</dbReference>
<dbReference type="Gene3D" id="3.40.1650.10">
    <property type="entry name" value="RbsD-like domain"/>
    <property type="match status" value="1"/>
</dbReference>
<dbReference type="HAMAP" id="MF_01661">
    <property type="entry name" value="D_rib_pyranase"/>
    <property type="match status" value="1"/>
</dbReference>
<dbReference type="InterPro" id="IPR023064">
    <property type="entry name" value="D-ribose_pyranase"/>
</dbReference>
<dbReference type="InterPro" id="IPR023750">
    <property type="entry name" value="RbsD-like_sf"/>
</dbReference>
<dbReference type="InterPro" id="IPR007721">
    <property type="entry name" value="RbsD_FucU"/>
</dbReference>
<dbReference type="NCBIfam" id="NF008761">
    <property type="entry name" value="PRK11797.1"/>
    <property type="match status" value="1"/>
</dbReference>
<dbReference type="PANTHER" id="PTHR37831">
    <property type="entry name" value="D-RIBOSE PYRANASE"/>
    <property type="match status" value="1"/>
</dbReference>
<dbReference type="PANTHER" id="PTHR37831:SF1">
    <property type="entry name" value="D-RIBOSE PYRANASE"/>
    <property type="match status" value="1"/>
</dbReference>
<dbReference type="Pfam" id="PF05025">
    <property type="entry name" value="RbsD_FucU"/>
    <property type="match status" value="1"/>
</dbReference>
<dbReference type="SUPFAM" id="SSF102546">
    <property type="entry name" value="RbsD-like"/>
    <property type="match status" value="1"/>
</dbReference>
<protein>
    <recommendedName>
        <fullName evidence="1">D-ribose pyranase</fullName>
        <ecNumber evidence="1">5.4.99.62</ecNumber>
    </recommendedName>
</protein>
<comment type="function">
    <text evidence="1">Catalyzes the interconversion of beta-pyran and beta-furan forms of D-ribose.</text>
</comment>
<comment type="catalytic activity">
    <reaction evidence="1">
        <text>beta-D-ribopyranose = beta-D-ribofuranose</text>
        <dbReference type="Rhea" id="RHEA:25432"/>
        <dbReference type="ChEBI" id="CHEBI:27476"/>
        <dbReference type="ChEBI" id="CHEBI:47002"/>
        <dbReference type="EC" id="5.4.99.62"/>
    </reaction>
</comment>
<comment type="pathway">
    <text evidence="1">Carbohydrate metabolism; D-ribose degradation; D-ribose 5-phosphate from beta-D-ribopyranose: step 1/2.</text>
</comment>
<comment type="subunit">
    <text evidence="1">Homodecamer.</text>
</comment>
<comment type="subcellular location">
    <subcellularLocation>
        <location evidence="1">Cytoplasm</location>
    </subcellularLocation>
</comment>
<comment type="similarity">
    <text evidence="1">Belongs to the RbsD / FucU family. RbsD subfamily.</text>
</comment>
<organism>
    <name type="scientific">Escherichia coli O17:K52:H18 (strain UMN026 / ExPEC)</name>
    <dbReference type="NCBI Taxonomy" id="585056"/>
    <lineage>
        <taxon>Bacteria</taxon>
        <taxon>Pseudomonadati</taxon>
        <taxon>Pseudomonadota</taxon>
        <taxon>Gammaproteobacteria</taxon>
        <taxon>Enterobacterales</taxon>
        <taxon>Enterobacteriaceae</taxon>
        <taxon>Escherichia</taxon>
    </lineage>
</organism>
<proteinExistence type="inferred from homology"/>
<name>RBSD_ECOLU</name>
<reference key="1">
    <citation type="journal article" date="2009" name="PLoS Genet.">
        <title>Organised genome dynamics in the Escherichia coli species results in highly diverse adaptive paths.</title>
        <authorList>
            <person name="Touchon M."/>
            <person name="Hoede C."/>
            <person name="Tenaillon O."/>
            <person name="Barbe V."/>
            <person name="Baeriswyl S."/>
            <person name="Bidet P."/>
            <person name="Bingen E."/>
            <person name="Bonacorsi S."/>
            <person name="Bouchier C."/>
            <person name="Bouvet O."/>
            <person name="Calteau A."/>
            <person name="Chiapello H."/>
            <person name="Clermont O."/>
            <person name="Cruveiller S."/>
            <person name="Danchin A."/>
            <person name="Diard M."/>
            <person name="Dossat C."/>
            <person name="Karoui M.E."/>
            <person name="Frapy E."/>
            <person name="Garry L."/>
            <person name="Ghigo J.M."/>
            <person name="Gilles A.M."/>
            <person name="Johnson J."/>
            <person name="Le Bouguenec C."/>
            <person name="Lescat M."/>
            <person name="Mangenot S."/>
            <person name="Martinez-Jehanne V."/>
            <person name="Matic I."/>
            <person name="Nassif X."/>
            <person name="Oztas S."/>
            <person name="Petit M.A."/>
            <person name="Pichon C."/>
            <person name="Rouy Z."/>
            <person name="Ruf C.S."/>
            <person name="Schneider D."/>
            <person name="Tourret J."/>
            <person name="Vacherie B."/>
            <person name="Vallenet D."/>
            <person name="Medigue C."/>
            <person name="Rocha E.P.C."/>
            <person name="Denamur E."/>
        </authorList>
    </citation>
    <scope>NUCLEOTIDE SEQUENCE [LARGE SCALE GENOMIC DNA]</scope>
    <source>
        <strain>UMN026 / ExPEC</strain>
    </source>
</reference>
<evidence type="ECO:0000255" key="1">
    <source>
        <dbReference type="HAMAP-Rule" id="MF_01661"/>
    </source>
</evidence>